<accession>Q0T342</accession>
<gene>
    <name evidence="1" type="primary">gatY</name>
    <name type="ordered locus">SFV_2151</name>
</gene>
<comment type="function">
    <text evidence="1">Catalytic subunit of the tagatose-1,6-bisphosphate aldolase GatYZ, which catalyzes the reversible aldol condensation of dihydroxyacetone phosphate (DHAP or glycerone-phosphate) with glyceraldehyde 3-phosphate (G3P) to produce tagatose 1,6-bisphosphate (TBP). Requires GatZ subunit for full activity and stability. Is involved in the catabolism of galactitol.</text>
</comment>
<comment type="catalytic activity">
    <reaction evidence="1">
        <text>D-tagatofuranose 1,6-bisphosphate = D-glyceraldehyde 3-phosphate + dihydroxyacetone phosphate</text>
        <dbReference type="Rhea" id="RHEA:22948"/>
        <dbReference type="ChEBI" id="CHEBI:57642"/>
        <dbReference type="ChEBI" id="CHEBI:58694"/>
        <dbReference type="ChEBI" id="CHEBI:59776"/>
        <dbReference type="EC" id="4.1.2.40"/>
    </reaction>
</comment>
<comment type="cofactor">
    <cofactor evidence="1">
        <name>Zn(2+)</name>
        <dbReference type="ChEBI" id="CHEBI:29105"/>
    </cofactor>
    <text evidence="1">Binds 1 zinc ion per subunit.</text>
</comment>
<comment type="pathway">
    <text evidence="1">Carbohydrate metabolism; D-tagatose 6-phosphate degradation; D-glyceraldehyde 3-phosphate and glycerone phosphate from D-tagatose 6-phosphate: step 2/2.</text>
</comment>
<comment type="subunit">
    <text evidence="1">Forms a complex with GatZ.</text>
</comment>
<comment type="similarity">
    <text evidence="1">Belongs to the class II fructose-bisphosphate aldolase family. TagBP aldolase GatY subfamily.</text>
</comment>
<comment type="sequence caution" evidence="2">
    <conflict type="erroneous initiation">
        <sequence resource="EMBL-CDS" id="ABF04273"/>
    </conflict>
</comment>
<feature type="chain" id="PRO_0000355355" description="D-tagatose-1,6-bisphosphate aldolase subunit GatY">
    <location>
        <begin position="1"/>
        <end position="284"/>
    </location>
</feature>
<feature type="active site" description="Proton donor" evidence="1">
    <location>
        <position position="82"/>
    </location>
</feature>
<feature type="binding site" evidence="1">
    <location>
        <position position="83"/>
    </location>
    <ligand>
        <name>Zn(2+)</name>
        <dbReference type="ChEBI" id="CHEBI:29105"/>
        <note>catalytic</note>
    </ligand>
</feature>
<feature type="binding site" evidence="1">
    <location>
        <position position="180"/>
    </location>
    <ligand>
        <name>Zn(2+)</name>
        <dbReference type="ChEBI" id="CHEBI:29105"/>
        <note>catalytic</note>
    </ligand>
</feature>
<feature type="binding site" evidence="1">
    <location>
        <position position="181"/>
    </location>
    <ligand>
        <name>dihydroxyacetone phosphate</name>
        <dbReference type="ChEBI" id="CHEBI:57642"/>
    </ligand>
</feature>
<feature type="binding site" evidence="1">
    <location>
        <position position="208"/>
    </location>
    <ligand>
        <name>Zn(2+)</name>
        <dbReference type="ChEBI" id="CHEBI:29105"/>
        <note>catalytic</note>
    </ligand>
</feature>
<feature type="binding site" evidence="1">
    <location>
        <begin position="209"/>
        <end position="211"/>
    </location>
    <ligand>
        <name>dihydroxyacetone phosphate</name>
        <dbReference type="ChEBI" id="CHEBI:57642"/>
    </ligand>
</feature>
<feature type="binding site" evidence="1">
    <location>
        <begin position="230"/>
        <end position="233"/>
    </location>
    <ligand>
        <name>dihydroxyacetone phosphate</name>
        <dbReference type="ChEBI" id="CHEBI:57642"/>
    </ligand>
</feature>
<organism>
    <name type="scientific">Shigella flexneri serotype 5b (strain 8401)</name>
    <dbReference type="NCBI Taxonomy" id="373384"/>
    <lineage>
        <taxon>Bacteria</taxon>
        <taxon>Pseudomonadati</taxon>
        <taxon>Pseudomonadota</taxon>
        <taxon>Gammaproteobacteria</taxon>
        <taxon>Enterobacterales</taxon>
        <taxon>Enterobacteriaceae</taxon>
        <taxon>Shigella</taxon>
    </lineage>
</organism>
<sequence>MYVVSTKQMLNNAQRGGYAVPAFNIHNLETMQVVVETAANLHAPVIIAGTPGTFTHAGTENLLALVSAMAKQYHHPLAIHLDHHTKFDDIAQKVRSGVRSVMIDASHLPFAQNISRVKEVVDFCHRFDVSVEAELGQLGGQEDDVQVNEVDALYTNPAQAREFAEATGIDSLAVTIGTAHGMYASAPVLDFSRLENIRQWVNLPLVLHGASGLSTKDIQQTIKLGICKINVATELKNAFSQSLKNYLTEHPEATDPRDYLQSAKSAMRDVVSKVIADCGCEGRA</sequence>
<dbReference type="EC" id="4.1.2.40" evidence="1"/>
<dbReference type="EMBL" id="CP000266">
    <property type="protein sequence ID" value="ABF04273.1"/>
    <property type="status" value="ALT_INIT"/>
    <property type="molecule type" value="Genomic_DNA"/>
</dbReference>
<dbReference type="RefSeq" id="WP_005105580.1">
    <property type="nucleotide sequence ID" value="NC_008258.1"/>
</dbReference>
<dbReference type="SMR" id="Q0T342"/>
<dbReference type="KEGG" id="sfv:SFV_2151"/>
<dbReference type="HOGENOM" id="CLU_040088_0_1_6"/>
<dbReference type="UniPathway" id="UPA00704">
    <property type="reaction ID" value="UER00716"/>
</dbReference>
<dbReference type="Proteomes" id="UP000000659">
    <property type="component" value="Chromosome"/>
</dbReference>
<dbReference type="GO" id="GO:0005829">
    <property type="term" value="C:cytosol"/>
    <property type="evidence" value="ECO:0007669"/>
    <property type="project" value="TreeGrafter"/>
</dbReference>
<dbReference type="GO" id="GO:0009025">
    <property type="term" value="F:tagatose-bisphosphate aldolase activity"/>
    <property type="evidence" value="ECO:0007669"/>
    <property type="project" value="UniProtKB-UniRule"/>
</dbReference>
<dbReference type="GO" id="GO:0008270">
    <property type="term" value="F:zinc ion binding"/>
    <property type="evidence" value="ECO:0007669"/>
    <property type="project" value="UniProtKB-UniRule"/>
</dbReference>
<dbReference type="GO" id="GO:2001059">
    <property type="term" value="P:D-tagatose 6-phosphate catabolic process"/>
    <property type="evidence" value="ECO:0007669"/>
    <property type="project" value="UniProtKB-UniRule"/>
</dbReference>
<dbReference type="GO" id="GO:0019404">
    <property type="term" value="P:galactitol catabolic process"/>
    <property type="evidence" value="ECO:0007669"/>
    <property type="project" value="InterPro"/>
</dbReference>
<dbReference type="CDD" id="cd00947">
    <property type="entry name" value="TBP_aldolase_IIB"/>
    <property type="match status" value="1"/>
</dbReference>
<dbReference type="FunFam" id="3.20.20.70:FF:000043">
    <property type="entry name" value="D-tagatose-1,6-bisphosphate aldolase subunit GatY"/>
    <property type="match status" value="1"/>
</dbReference>
<dbReference type="Gene3D" id="3.20.20.70">
    <property type="entry name" value="Aldolase class I"/>
    <property type="match status" value="1"/>
</dbReference>
<dbReference type="HAMAP" id="MF_01294">
    <property type="entry name" value="TagBP_aldolase_GatY"/>
    <property type="match status" value="1"/>
</dbReference>
<dbReference type="InterPro" id="IPR013785">
    <property type="entry name" value="Aldolase_TIM"/>
</dbReference>
<dbReference type="InterPro" id="IPR050246">
    <property type="entry name" value="Class_II_FBP_aldolase"/>
</dbReference>
<dbReference type="InterPro" id="IPR000771">
    <property type="entry name" value="FBA_II"/>
</dbReference>
<dbReference type="InterPro" id="IPR011288">
    <property type="entry name" value="TagBP_ald_KbaY/GatY"/>
</dbReference>
<dbReference type="InterPro" id="IPR023955">
    <property type="entry name" value="TagBP_aldolase_GatY"/>
</dbReference>
<dbReference type="NCBIfam" id="TIGR00167">
    <property type="entry name" value="cbbA"/>
    <property type="match status" value="1"/>
</dbReference>
<dbReference type="NCBIfam" id="NF006626">
    <property type="entry name" value="PRK09195.1"/>
    <property type="match status" value="1"/>
</dbReference>
<dbReference type="NCBIfam" id="NF009374">
    <property type="entry name" value="PRK12737.1"/>
    <property type="match status" value="1"/>
</dbReference>
<dbReference type="NCBIfam" id="TIGR01858">
    <property type="entry name" value="tag_bisphos_ald"/>
    <property type="match status" value="1"/>
</dbReference>
<dbReference type="PANTHER" id="PTHR30304">
    <property type="entry name" value="D-TAGATOSE-1,6-BISPHOSPHATE ALDOLASE"/>
    <property type="match status" value="1"/>
</dbReference>
<dbReference type="PANTHER" id="PTHR30304:SF0">
    <property type="entry name" value="D-TAGATOSE-1,6-BISPHOSPHATE ALDOLASE SUBUNIT GATY-RELATED"/>
    <property type="match status" value="1"/>
</dbReference>
<dbReference type="Pfam" id="PF01116">
    <property type="entry name" value="F_bP_aldolase"/>
    <property type="match status" value="1"/>
</dbReference>
<dbReference type="PIRSF" id="PIRSF001359">
    <property type="entry name" value="F_bP_aldolase_II"/>
    <property type="match status" value="1"/>
</dbReference>
<dbReference type="SUPFAM" id="SSF51569">
    <property type="entry name" value="Aldolase"/>
    <property type="match status" value="1"/>
</dbReference>
<dbReference type="PROSITE" id="PS00602">
    <property type="entry name" value="ALDOLASE_CLASS_II_1"/>
    <property type="match status" value="1"/>
</dbReference>
<dbReference type="PROSITE" id="PS00806">
    <property type="entry name" value="ALDOLASE_CLASS_II_2"/>
    <property type="match status" value="1"/>
</dbReference>
<keyword id="KW-0298">Galactitol metabolism</keyword>
<keyword id="KW-0456">Lyase</keyword>
<keyword id="KW-0479">Metal-binding</keyword>
<keyword id="KW-0862">Zinc</keyword>
<reference key="1">
    <citation type="journal article" date="2006" name="BMC Genomics">
        <title>Complete genome sequence of Shigella flexneri 5b and comparison with Shigella flexneri 2a.</title>
        <authorList>
            <person name="Nie H."/>
            <person name="Yang F."/>
            <person name="Zhang X."/>
            <person name="Yang J."/>
            <person name="Chen L."/>
            <person name="Wang J."/>
            <person name="Xiong Z."/>
            <person name="Peng J."/>
            <person name="Sun L."/>
            <person name="Dong J."/>
            <person name="Xue Y."/>
            <person name="Xu X."/>
            <person name="Chen S."/>
            <person name="Yao Z."/>
            <person name="Shen Y."/>
            <person name="Jin Q."/>
        </authorList>
    </citation>
    <scope>NUCLEOTIDE SEQUENCE [LARGE SCALE GENOMIC DNA]</scope>
    <source>
        <strain>8401</strain>
    </source>
</reference>
<evidence type="ECO:0000255" key="1">
    <source>
        <dbReference type="HAMAP-Rule" id="MF_01294"/>
    </source>
</evidence>
<evidence type="ECO:0000305" key="2"/>
<proteinExistence type="inferred from homology"/>
<name>GATY_SHIF8</name>
<protein>
    <recommendedName>
        <fullName evidence="1">D-tagatose-1,6-bisphosphate aldolase subunit GatY</fullName>
        <shortName evidence="1">TBPA</shortName>
        <shortName evidence="1">TagBP aldolase</shortName>
        <ecNumber evidence="1">4.1.2.40</ecNumber>
    </recommendedName>
    <alternativeName>
        <fullName evidence="1">D-tagatose-bisphosphate aldolase class II</fullName>
    </alternativeName>
    <alternativeName>
        <fullName evidence="1">Tagatose-bisphosphate aldolase</fullName>
    </alternativeName>
</protein>